<name>IRC6_CLAL4</name>
<reference key="1">
    <citation type="journal article" date="2009" name="Nature">
        <title>Evolution of pathogenicity and sexual reproduction in eight Candida genomes.</title>
        <authorList>
            <person name="Butler G."/>
            <person name="Rasmussen M.D."/>
            <person name="Lin M.F."/>
            <person name="Santos M.A.S."/>
            <person name="Sakthikumar S."/>
            <person name="Munro C.A."/>
            <person name="Rheinbay E."/>
            <person name="Grabherr M."/>
            <person name="Forche A."/>
            <person name="Reedy J.L."/>
            <person name="Agrafioti I."/>
            <person name="Arnaud M.B."/>
            <person name="Bates S."/>
            <person name="Brown A.J.P."/>
            <person name="Brunke S."/>
            <person name="Costanzo M.C."/>
            <person name="Fitzpatrick D.A."/>
            <person name="de Groot P.W.J."/>
            <person name="Harris D."/>
            <person name="Hoyer L.L."/>
            <person name="Hube B."/>
            <person name="Klis F.M."/>
            <person name="Kodira C."/>
            <person name="Lennard N."/>
            <person name="Logue M.E."/>
            <person name="Martin R."/>
            <person name="Neiman A.M."/>
            <person name="Nikolaou E."/>
            <person name="Quail M.A."/>
            <person name="Quinn J."/>
            <person name="Santos M.C."/>
            <person name="Schmitzberger F.F."/>
            <person name="Sherlock G."/>
            <person name="Shah P."/>
            <person name="Silverstein K.A.T."/>
            <person name="Skrzypek M.S."/>
            <person name="Soll D."/>
            <person name="Staggs R."/>
            <person name="Stansfield I."/>
            <person name="Stumpf M.P.H."/>
            <person name="Sudbery P.E."/>
            <person name="Srikantha T."/>
            <person name="Zeng Q."/>
            <person name="Berman J."/>
            <person name="Berriman M."/>
            <person name="Heitman J."/>
            <person name="Gow N.A.R."/>
            <person name="Lorenz M.C."/>
            <person name="Birren B.W."/>
            <person name="Kellis M."/>
            <person name="Cuomo C.A."/>
        </authorList>
    </citation>
    <scope>NUCLEOTIDE SEQUENCE [LARGE SCALE GENOMIC DNA]</scope>
    <source>
        <strain>ATCC 42720</strain>
    </source>
</reference>
<gene>
    <name type="primary">IRC6</name>
    <name type="ORF">CLUG_03874</name>
</gene>
<sequence length="268" mass="31329">MDRNNVLVLGPPKSGKIRFAQFISGDYETETISDDSHSGLMYKCNLKTKYFSVDVNLLIEEFPESRKEPEEKWISSLQTWFGEFESDTMADLREVIEGVVFTVCVNEWDDNVIKQQLDILSNMKDLLKDNDPFFIVMGVSEHDIEQDTMADLEDLVLLNGFEFVYFNDSGMNEFRDKMGKDRLLEVLETHEWTQKHLTHVSNEDYMAYKKEKMTSMTQGLLQEDDCNIPTLDVLLQKLQIEKSKVEEMKENERKGYVDGLVDEFLEYF</sequence>
<evidence type="ECO:0000250" key="1"/>
<evidence type="ECO:0000305" key="2"/>
<dbReference type="EMBL" id="CH408079">
    <property type="protein sequence ID" value="EEQ39746.1"/>
    <property type="molecule type" value="Genomic_DNA"/>
</dbReference>
<dbReference type="RefSeq" id="XP_002616633.1">
    <property type="nucleotide sequence ID" value="XM_002616587.1"/>
</dbReference>
<dbReference type="SMR" id="C4Y6U0"/>
<dbReference type="FunCoup" id="C4Y6U0">
    <property type="interactions" value="20"/>
</dbReference>
<dbReference type="STRING" id="306902.C4Y6U0"/>
<dbReference type="GeneID" id="8497091"/>
<dbReference type="KEGG" id="clu:CLUG_03874"/>
<dbReference type="VEuPathDB" id="FungiDB:CLUG_03874"/>
<dbReference type="HOGENOM" id="CLU_064540_0_0_1"/>
<dbReference type="InParanoid" id="C4Y6U0"/>
<dbReference type="OMA" id="LMFTINM"/>
<dbReference type="OrthoDB" id="11551at4891"/>
<dbReference type="Proteomes" id="UP000007703">
    <property type="component" value="Unassembled WGS sequence"/>
</dbReference>
<dbReference type="GO" id="GO:0030674">
    <property type="term" value="F:protein-macromolecule adaptor activity"/>
    <property type="evidence" value="ECO:0007669"/>
    <property type="project" value="TreeGrafter"/>
</dbReference>
<dbReference type="GO" id="GO:0016192">
    <property type="term" value="P:vesicle-mediated transport"/>
    <property type="evidence" value="ECO:0007669"/>
    <property type="project" value="InterPro"/>
</dbReference>
<dbReference type="Gene3D" id="3.40.50.11960">
    <property type="match status" value="1"/>
</dbReference>
<dbReference type="InterPro" id="IPR034627">
    <property type="entry name" value="Irc6"/>
</dbReference>
<dbReference type="PANTHER" id="PTHR28043">
    <property type="entry name" value="INCREASED RECOMBINATION CENTERS PROTEIN 6"/>
    <property type="match status" value="1"/>
</dbReference>
<dbReference type="PANTHER" id="PTHR28043:SF1">
    <property type="entry name" value="INCREASED RECOMBINATION CENTERS PROTEIN 6"/>
    <property type="match status" value="1"/>
</dbReference>
<dbReference type="Pfam" id="PF10199">
    <property type="entry name" value="Adaptin_binding"/>
    <property type="match status" value="1"/>
</dbReference>
<comment type="function">
    <text evidence="1">Involved in gross chromosomal rearrangements (GCRs) and telomere healing.</text>
</comment>
<comment type="similarity">
    <text evidence="2">Belongs to the IRC6 family.</text>
</comment>
<accession>C4Y6U0</accession>
<organism>
    <name type="scientific">Clavispora lusitaniae (strain ATCC 42720)</name>
    <name type="common">Yeast</name>
    <name type="synonym">Candida lusitaniae</name>
    <dbReference type="NCBI Taxonomy" id="306902"/>
    <lineage>
        <taxon>Eukaryota</taxon>
        <taxon>Fungi</taxon>
        <taxon>Dikarya</taxon>
        <taxon>Ascomycota</taxon>
        <taxon>Saccharomycotina</taxon>
        <taxon>Pichiomycetes</taxon>
        <taxon>Metschnikowiaceae</taxon>
        <taxon>Clavispora</taxon>
    </lineage>
</organism>
<keyword id="KW-0160">Chromosomal rearrangement</keyword>
<keyword id="KW-1185">Reference proteome</keyword>
<protein>
    <recommendedName>
        <fullName>Increased recombination centers protein 6</fullName>
    </recommendedName>
</protein>
<proteinExistence type="inferred from homology"/>
<feature type="chain" id="PRO_0000399221" description="Increased recombination centers protein 6">
    <location>
        <begin position="1"/>
        <end position="268"/>
    </location>
</feature>